<dbReference type="EMBL" id="EU606015">
    <property type="protein sequence ID" value="ACF16988.1"/>
    <property type="molecule type" value="Genomic_DNA"/>
</dbReference>
<dbReference type="RefSeq" id="YP_002122365.1">
    <property type="nucleotide sequence ID" value="NC_011132.1"/>
</dbReference>
<dbReference type="KEGG" id="vg:6760331"/>
<dbReference type="OrthoDB" id="34506at10239"/>
<dbReference type="Proteomes" id="UP000001863">
    <property type="component" value="Segment"/>
</dbReference>
<proteinExistence type="predicted"/>
<accession>B4YNE4</accession>
<gene>
    <name type="ORF">ORF4</name>
</gene>
<organism>
    <name type="scientific">Sputnik virophage</name>
    <dbReference type="NCBI Taxonomy" id="543939"/>
    <lineage>
        <taxon>Viruses</taxon>
        <taxon>Varidnaviria</taxon>
        <taxon>Bamfordvirae</taxon>
        <taxon>Preplasmiviricota</taxon>
        <taxon>Maveriviricetes</taxon>
        <taxon>Priklausovirales</taxon>
        <taxon>Lavidaviridae</taxon>
        <taxon>Sputnikvirus</taxon>
        <taxon>Mimivirus-dependent virus Sputnik</taxon>
    </lineage>
</organism>
<organismHost>
    <name type="scientific">Acanthamoeba polyphaga</name>
    <name type="common">Amoeba</name>
    <dbReference type="NCBI Taxonomy" id="5757"/>
</organismHost>
<feature type="chain" id="PRO_0000369812" description="Uncharacterized protein V4">
    <location>
        <begin position="1"/>
        <end position="139"/>
    </location>
</feature>
<protein>
    <recommendedName>
        <fullName>Uncharacterized protein V4</fullName>
    </recommendedName>
</protein>
<keyword id="KW-1185">Reference proteome</keyword>
<reference key="1">
    <citation type="journal article" date="2008" name="Nature">
        <title>The virophage as a unique parasite of the giant mimivirus.</title>
        <authorList>
            <person name="La Scola B."/>
            <person name="Desnues C."/>
            <person name="Pagnier I."/>
            <person name="Robert C."/>
            <person name="Barrassi L."/>
            <person name="Fournous G."/>
            <person name="Merchat M."/>
            <person name="Suzan-Monti M."/>
            <person name="Forterre P."/>
            <person name="Koonin E."/>
            <person name="Raoult D."/>
        </authorList>
    </citation>
    <scope>NUCLEOTIDE SEQUENCE [GENOMIC DNA]</scope>
</reference>
<sequence>MLGGDTPYDFAEKKYITRMNKDEINYLMTPVPKAVYKNRKSPIDLPFFNGKKQDAYGHLLDNVEKPIYKSGGQNVYANSWNGRTYGKKPAKAQPTDRLICEFCGKTYTRSNRSTHRKTEVCKAYQSMNKKLKDVLLRTD</sequence>
<name>V4_SPTNK</name>